<proteinExistence type="uncertain"/>
<dbReference type="EMBL" id="Z46260">
    <property type="status" value="NOT_ANNOTATED_CDS"/>
    <property type="molecule type" value="Genomic_DNA"/>
</dbReference>
<dbReference type="EMBL" id="Z35925">
    <property type="status" value="NOT_ANNOTATED_CDS"/>
    <property type="molecule type" value="Genomic_DNA"/>
</dbReference>
<dbReference type="EMBL" id="Z35926">
    <property type="status" value="NOT_ANNOTATED_CDS"/>
    <property type="molecule type" value="Genomic_DNA"/>
</dbReference>
<dbReference type="STRING" id="4932.YBR056C-B"/>
<dbReference type="PaxDb" id="4932-YBR056C-B"/>
<dbReference type="EnsemblFungi" id="YBR056C-B_mRNA">
    <property type="protein sequence ID" value="YBR056C-B"/>
    <property type="gene ID" value="YBR056C-B"/>
</dbReference>
<dbReference type="AGR" id="SGD:S000087087"/>
<dbReference type="SGD" id="S000087087">
    <property type="gene designation" value="YBR056C-B"/>
</dbReference>
<dbReference type="HOGENOM" id="CLU_3089067_0_0_1"/>
<evidence type="ECO:0000305" key="1"/>
<evidence type="ECO:0000305" key="2">
    <source>
    </source>
</evidence>
<sequence length="52" mass="5740">MPPAQLQHRSIRHRQHKTFAIAEQQSPQLQQQQQSFLGGGGPCCMYIGCGCG</sequence>
<organism>
    <name type="scientific">Saccharomyces cerevisiae (strain ATCC 204508 / S288c)</name>
    <name type="common">Baker's yeast</name>
    <dbReference type="NCBI Taxonomy" id="559292"/>
    <lineage>
        <taxon>Eukaryota</taxon>
        <taxon>Fungi</taxon>
        <taxon>Dikarya</taxon>
        <taxon>Ascomycota</taxon>
        <taxon>Saccharomycotina</taxon>
        <taxon>Saccharomycetes</taxon>
        <taxon>Saccharomycetales</taxon>
        <taxon>Saccharomycetaceae</taxon>
        <taxon>Saccharomyces</taxon>
    </lineage>
</organism>
<gene>
    <name type="ordered locus">YBR056C-B</name>
</gene>
<comment type="miscellaneous">
    <text evidence="1">Completely overlaps YBR056W-A.</text>
</comment>
<comment type="caution">
    <text evidence="2">Product of a dubious gene prediction unlikely to encode a functional protein. Because of that it is not part of the S.cerevisiae S288c complete/reference proteome set.</text>
</comment>
<feature type="chain" id="PRO_0000309008" description="Putative uncharacterized protein YBR056C-B">
    <location>
        <begin position="1"/>
        <end position="52"/>
    </location>
</feature>
<name>YB056_YEAST</name>
<protein>
    <recommendedName>
        <fullName>Putative uncharacterized protein YBR056C-B</fullName>
    </recommendedName>
</protein>
<accession>P0C5L0</accession>
<reference key="1">
    <citation type="journal article" date="1995" name="Yeast">
        <title>Sequence and analysis of 24 kb on chromosome II of Saccharomyces cerevisiae.</title>
        <authorList>
            <person name="Aljinovic G."/>
            <person name="Pohl T.M."/>
        </authorList>
    </citation>
    <scope>NUCLEOTIDE SEQUENCE [GENOMIC DNA]</scope>
    <source>
        <strain>ATCC 204508 / S288c</strain>
    </source>
</reference>
<reference key="2">
    <citation type="journal article" date="1994" name="EMBO J.">
        <title>Complete DNA sequence of yeast chromosome II.</title>
        <authorList>
            <person name="Feldmann H."/>
            <person name="Aigle M."/>
            <person name="Aljinovic G."/>
            <person name="Andre B."/>
            <person name="Baclet M.C."/>
            <person name="Barthe C."/>
            <person name="Baur A."/>
            <person name="Becam A.-M."/>
            <person name="Biteau N."/>
            <person name="Boles E."/>
            <person name="Brandt T."/>
            <person name="Brendel M."/>
            <person name="Brueckner M."/>
            <person name="Bussereau F."/>
            <person name="Christiansen C."/>
            <person name="Contreras R."/>
            <person name="Crouzet M."/>
            <person name="Cziepluch C."/>
            <person name="Demolis N."/>
            <person name="Delaveau T."/>
            <person name="Doignon F."/>
            <person name="Domdey H."/>
            <person name="Duesterhus S."/>
            <person name="Dubois E."/>
            <person name="Dujon B."/>
            <person name="El Bakkoury M."/>
            <person name="Entian K.-D."/>
            <person name="Feuermann M."/>
            <person name="Fiers W."/>
            <person name="Fobo G.M."/>
            <person name="Fritz C."/>
            <person name="Gassenhuber J."/>
            <person name="Glansdorff N."/>
            <person name="Goffeau A."/>
            <person name="Grivell L.A."/>
            <person name="de Haan M."/>
            <person name="Hein C."/>
            <person name="Herbert C.J."/>
            <person name="Hollenberg C.P."/>
            <person name="Holmstroem K."/>
            <person name="Jacq C."/>
            <person name="Jacquet M."/>
            <person name="Jauniaux J.-C."/>
            <person name="Jonniaux J.-L."/>
            <person name="Kallesoee T."/>
            <person name="Kiesau P."/>
            <person name="Kirchrath L."/>
            <person name="Koetter P."/>
            <person name="Korol S."/>
            <person name="Liebl S."/>
            <person name="Logghe M."/>
            <person name="Lohan A.J.E."/>
            <person name="Louis E.J."/>
            <person name="Li Z.Y."/>
            <person name="Maat M.J."/>
            <person name="Mallet L."/>
            <person name="Mannhaupt G."/>
            <person name="Messenguy F."/>
            <person name="Miosga T."/>
            <person name="Molemans F."/>
            <person name="Mueller S."/>
            <person name="Nasr F."/>
            <person name="Obermaier B."/>
            <person name="Perea J."/>
            <person name="Pierard A."/>
            <person name="Piravandi E."/>
            <person name="Pohl F.M."/>
            <person name="Pohl T.M."/>
            <person name="Potier S."/>
            <person name="Proft M."/>
            <person name="Purnelle B."/>
            <person name="Ramezani Rad M."/>
            <person name="Rieger M."/>
            <person name="Rose M."/>
            <person name="Schaaff-Gerstenschlaeger I."/>
            <person name="Scherens B."/>
            <person name="Schwarzlose C."/>
            <person name="Skala J."/>
            <person name="Slonimski P.P."/>
            <person name="Smits P.H.M."/>
            <person name="Souciet J.-L."/>
            <person name="Steensma H.Y."/>
            <person name="Stucka R."/>
            <person name="Urrestarazu L.A."/>
            <person name="van der Aart Q.J.M."/>
            <person name="Van Dyck L."/>
            <person name="Vassarotti A."/>
            <person name="Vetter I."/>
            <person name="Vierendeels F."/>
            <person name="Vissers S."/>
            <person name="Wagner G."/>
            <person name="de Wergifosse P."/>
            <person name="Wolfe K.H."/>
            <person name="Zagulski M."/>
            <person name="Zimmermann F.K."/>
            <person name="Mewes H.-W."/>
            <person name="Kleine K."/>
        </authorList>
    </citation>
    <scope>NUCLEOTIDE SEQUENCE [LARGE SCALE GENOMIC DNA]</scope>
    <source>
        <strain>ATCC 204508 / S288c</strain>
    </source>
</reference>
<reference key="3">
    <citation type="journal article" date="2014" name="G3 (Bethesda)">
        <title>The reference genome sequence of Saccharomyces cerevisiae: Then and now.</title>
        <authorList>
            <person name="Engel S.R."/>
            <person name="Dietrich F.S."/>
            <person name="Fisk D.G."/>
            <person name="Binkley G."/>
            <person name="Balakrishnan R."/>
            <person name="Costanzo M.C."/>
            <person name="Dwight S.S."/>
            <person name="Hitz B.C."/>
            <person name="Karra K."/>
            <person name="Nash R.S."/>
            <person name="Weng S."/>
            <person name="Wong E.D."/>
            <person name="Lloyd P."/>
            <person name="Skrzypek M.S."/>
            <person name="Miyasato S.R."/>
            <person name="Simison M."/>
            <person name="Cherry J.M."/>
        </authorList>
    </citation>
    <scope>GENOME REANNOTATION</scope>
    <source>
        <strain>ATCC 204508 / S288c</strain>
    </source>
</reference>
<reference key="4">
    <citation type="journal article" date="2003" name="Science">
        <title>Finding functional features in Saccharomyces genomes by phylogenetic footprinting.</title>
        <authorList>
            <person name="Cliften P.F."/>
            <person name="Sudarsanam P."/>
            <person name="Desikan A."/>
            <person name="Fulton L."/>
            <person name="Fulton B."/>
            <person name="Majors J."/>
            <person name="Waterston R."/>
            <person name="Cohen B.A."/>
            <person name="Johnston M."/>
        </authorList>
    </citation>
    <scope>GENOME REANNOTATION</scope>
</reference>